<dbReference type="EMBL" id="CP000236">
    <property type="protein sequence ID" value="ABD45378.1"/>
    <property type="molecule type" value="Genomic_DNA"/>
</dbReference>
<dbReference type="RefSeq" id="WP_011452494.1">
    <property type="nucleotide sequence ID" value="NC_007799.1"/>
</dbReference>
<dbReference type="PDB" id="6VUD">
    <property type="method" value="X-ray"/>
    <property type="resolution" value="2.35 A"/>
    <property type="chains" value="A/B=1-185"/>
</dbReference>
<dbReference type="PDBsum" id="6VUD"/>
<dbReference type="SMR" id="Q2GHJ5"/>
<dbReference type="STRING" id="205920.ECH_0267"/>
<dbReference type="KEGG" id="ech:ECH_0267"/>
<dbReference type="eggNOG" id="COG0233">
    <property type="taxonomic scope" value="Bacteria"/>
</dbReference>
<dbReference type="HOGENOM" id="CLU_073981_2_1_5"/>
<dbReference type="OrthoDB" id="9804006at2"/>
<dbReference type="Proteomes" id="UP000008320">
    <property type="component" value="Chromosome"/>
</dbReference>
<dbReference type="GO" id="GO:0005737">
    <property type="term" value="C:cytoplasm"/>
    <property type="evidence" value="ECO:0007669"/>
    <property type="project" value="UniProtKB-SubCell"/>
</dbReference>
<dbReference type="GO" id="GO:0043023">
    <property type="term" value="F:ribosomal large subunit binding"/>
    <property type="evidence" value="ECO:0007669"/>
    <property type="project" value="TreeGrafter"/>
</dbReference>
<dbReference type="GO" id="GO:0006415">
    <property type="term" value="P:translational termination"/>
    <property type="evidence" value="ECO:0007669"/>
    <property type="project" value="UniProtKB-UniRule"/>
</dbReference>
<dbReference type="CDD" id="cd00520">
    <property type="entry name" value="RRF"/>
    <property type="match status" value="1"/>
</dbReference>
<dbReference type="FunFam" id="1.10.132.20:FF:000001">
    <property type="entry name" value="Ribosome-recycling factor"/>
    <property type="match status" value="1"/>
</dbReference>
<dbReference type="FunFam" id="3.30.1360.40:FF:000001">
    <property type="entry name" value="Ribosome-recycling factor"/>
    <property type="match status" value="1"/>
</dbReference>
<dbReference type="Gene3D" id="3.30.1360.40">
    <property type="match status" value="1"/>
</dbReference>
<dbReference type="Gene3D" id="1.10.132.20">
    <property type="entry name" value="Ribosome-recycling factor"/>
    <property type="match status" value="1"/>
</dbReference>
<dbReference type="HAMAP" id="MF_00040">
    <property type="entry name" value="RRF"/>
    <property type="match status" value="1"/>
</dbReference>
<dbReference type="InterPro" id="IPR002661">
    <property type="entry name" value="Ribosome_recyc_fac"/>
</dbReference>
<dbReference type="InterPro" id="IPR023584">
    <property type="entry name" value="Ribosome_recyc_fac_dom"/>
</dbReference>
<dbReference type="InterPro" id="IPR036191">
    <property type="entry name" value="RRF_sf"/>
</dbReference>
<dbReference type="NCBIfam" id="TIGR00496">
    <property type="entry name" value="frr"/>
    <property type="match status" value="1"/>
</dbReference>
<dbReference type="PANTHER" id="PTHR20982:SF3">
    <property type="entry name" value="MITOCHONDRIAL RIBOSOME RECYCLING FACTOR PSEUDO 1"/>
    <property type="match status" value="1"/>
</dbReference>
<dbReference type="PANTHER" id="PTHR20982">
    <property type="entry name" value="RIBOSOME RECYCLING FACTOR"/>
    <property type="match status" value="1"/>
</dbReference>
<dbReference type="Pfam" id="PF01765">
    <property type="entry name" value="RRF"/>
    <property type="match status" value="1"/>
</dbReference>
<dbReference type="SUPFAM" id="SSF55194">
    <property type="entry name" value="Ribosome recycling factor, RRF"/>
    <property type="match status" value="1"/>
</dbReference>
<accession>Q2GHJ5</accession>
<feature type="chain" id="PRO_1000003160" description="Ribosome-recycling factor">
    <location>
        <begin position="1"/>
        <end position="185"/>
    </location>
</feature>
<feature type="helix" evidence="2">
    <location>
        <begin position="2"/>
        <end position="25"/>
    </location>
</feature>
<feature type="helix" evidence="2">
    <location>
        <begin position="34"/>
        <end position="37"/>
    </location>
</feature>
<feature type="strand" evidence="2">
    <location>
        <begin position="41"/>
        <end position="44"/>
    </location>
</feature>
<feature type="strand" evidence="2">
    <location>
        <begin position="47"/>
        <end position="50"/>
    </location>
</feature>
<feature type="helix" evidence="2">
    <location>
        <begin position="51"/>
        <end position="53"/>
    </location>
</feature>
<feature type="strand" evidence="2">
    <location>
        <begin position="54"/>
        <end position="61"/>
    </location>
</feature>
<feature type="strand" evidence="2">
    <location>
        <begin position="64"/>
        <end position="71"/>
    </location>
</feature>
<feature type="helix" evidence="2">
    <location>
        <begin position="72"/>
        <end position="74"/>
    </location>
</feature>
<feature type="helix" evidence="2">
    <location>
        <begin position="75"/>
        <end position="84"/>
    </location>
</feature>
<feature type="strand" evidence="2">
    <location>
        <begin position="90"/>
        <end position="94"/>
    </location>
</feature>
<feature type="strand" evidence="2">
    <location>
        <begin position="97"/>
        <end position="101"/>
    </location>
</feature>
<feature type="helix" evidence="2">
    <location>
        <begin position="107"/>
        <end position="144"/>
    </location>
</feature>
<feature type="helix" evidence="2">
    <location>
        <begin position="150"/>
        <end position="183"/>
    </location>
</feature>
<proteinExistence type="evidence at protein level"/>
<gene>
    <name evidence="1" type="primary">frr</name>
    <name type="ordered locus">ECH_0267</name>
</gene>
<evidence type="ECO:0000255" key="1">
    <source>
        <dbReference type="HAMAP-Rule" id="MF_00040"/>
    </source>
</evidence>
<evidence type="ECO:0007829" key="2">
    <source>
        <dbReference type="PDB" id="6VUD"/>
    </source>
</evidence>
<keyword id="KW-0002">3D-structure</keyword>
<keyword id="KW-0963">Cytoplasm</keyword>
<keyword id="KW-0648">Protein biosynthesis</keyword>
<keyword id="KW-1185">Reference proteome</keyword>
<comment type="function">
    <text evidence="1">Responsible for the release of ribosomes from messenger RNA at the termination of protein biosynthesis. May increase the efficiency of translation by recycling ribosomes from one round of translation to another.</text>
</comment>
<comment type="subcellular location">
    <subcellularLocation>
        <location evidence="1">Cytoplasm</location>
    </subcellularLocation>
</comment>
<comment type="similarity">
    <text evidence="1">Belongs to the RRF family.</text>
</comment>
<reference key="1">
    <citation type="journal article" date="2006" name="PLoS Genet.">
        <title>Comparative genomics of emerging human ehrlichiosis agents.</title>
        <authorList>
            <person name="Dunning Hotopp J.C."/>
            <person name="Lin M."/>
            <person name="Madupu R."/>
            <person name="Crabtree J."/>
            <person name="Angiuoli S.V."/>
            <person name="Eisen J.A."/>
            <person name="Seshadri R."/>
            <person name="Ren Q."/>
            <person name="Wu M."/>
            <person name="Utterback T.R."/>
            <person name="Smith S."/>
            <person name="Lewis M."/>
            <person name="Khouri H."/>
            <person name="Zhang C."/>
            <person name="Niu H."/>
            <person name="Lin Q."/>
            <person name="Ohashi N."/>
            <person name="Zhi N."/>
            <person name="Nelson W.C."/>
            <person name="Brinkac L.M."/>
            <person name="Dodson R.J."/>
            <person name="Rosovitz M.J."/>
            <person name="Sundaram J.P."/>
            <person name="Daugherty S.C."/>
            <person name="Davidsen T."/>
            <person name="Durkin A.S."/>
            <person name="Gwinn M.L."/>
            <person name="Haft D.H."/>
            <person name="Selengut J.D."/>
            <person name="Sullivan S.A."/>
            <person name="Zafar N."/>
            <person name="Zhou L."/>
            <person name="Benahmed F."/>
            <person name="Forberger H."/>
            <person name="Halpin R."/>
            <person name="Mulligan S."/>
            <person name="Robinson J."/>
            <person name="White O."/>
            <person name="Rikihisa Y."/>
            <person name="Tettelin H."/>
        </authorList>
    </citation>
    <scope>NUCLEOTIDE SEQUENCE [LARGE SCALE GENOMIC DNA]</scope>
    <source>
        <strain>ATCC CRL-10679 / Arkansas</strain>
    </source>
</reference>
<name>RRF_EHRCR</name>
<protein>
    <recommendedName>
        <fullName evidence="1">Ribosome-recycling factor</fullName>
        <shortName evidence="1">RRF</shortName>
    </recommendedName>
    <alternativeName>
        <fullName evidence="1">Ribosome-releasing factor</fullName>
    </alternativeName>
</protein>
<organism>
    <name type="scientific">Ehrlichia chaffeensis (strain ATCC CRL-10679 / Arkansas)</name>
    <dbReference type="NCBI Taxonomy" id="205920"/>
    <lineage>
        <taxon>Bacteria</taxon>
        <taxon>Pseudomonadati</taxon>
        <taxon>Pseudomonadota</taxon>
        <taxon>Alphaproteobacteria</taxon>
        <taxon>Rickettsiales</taxon>
        <taxon>Anaplasmataceae</taxon>
        <taxon>Ehrlichia</taxon>
    </lineage>
</organism>
<sequence>MISEVKQDAKSRMEKSLSVYLSDIDGIRTGRARTSVLNGIVVETYGGRVKLNTISSVSVSDNKTLMIKVWDSNNIGAIKTAIMNSNLGFGISCEATTIRLTVPDMTQDMRKNLVKLLGKISEDCRVSIRNIRRDIMDRLKVMQDSKEISEDDLRVAGVEIQKITDDIMKKVNDAFTSKEKELLHV</sequence>